<gene>
    <name type="primary">TMX2</name>
    <name type="synonym">TXNDC14</name>
    <name type="ORF">QtrA-12926</name>
</gene>
<proteinExistence type="evidence at transcript level"/>
<accession>Q4R5B4</accession>
<reference key="1">
    <citation type="submission" date="2005-06" db="EMBL/GenBank/DDBJ databases">
        <title>DNA sequences of macaque genes expressed in brain or testis and its evolutionary implications.</title>
        <authorList>
            <consortium name="International consortium for macaque cDNA sequencing and analysis"/>
        </authorList>
    </citation>
    <scope>NUCLEOTIDE SEQUENCE [LARGE SCALE MRNA]</scope>
    <source>
        <tissue>Temporal cortex</tissue>
    </source>
</reference>
<protein>
    <recommendedName>
        <fullName>Thioredoxin-related transmembrane protein 2</fullName>
    </recommendedName>
    <alternativeName>
        <fullName>Thioredoxin domain-containing protein 14</fullName>
    </alternativeName>
</protein>
<dbReference type="EMBL" id="AB169630">
    <property type="protein sequence ID" value="BAE01711.1"/>
    <property type="molecule type" value="mRNA"/>
</dbReference>
<dbReference type="RefSeq" id="NP_001272093.1">
    <property type="nucleotide sequence ID" value="NM_001285164.1"/>
</dbReference>
<dbReference type="BMRB" id="Q4R5B4"/>
<dbReference type="SMR" id="Q4R5B4"/>
<dbReference type="STRING" id="9541.ENSMFAP00000033294"/>
<dbReference type="eggNOG" id="KOG0914">
    <property type="taxonomic scope" value="Eukaryota"/>
</dbReference>
<dbReference type="Proteomes" id="UP000233100">
    <property type="component" value="Unplaced"/>
</dbReference>
<dbReference type="GO" id="GO:0005789">
    <property type="term" value="C:endoplasmic reticulum membrane"/>
    <property type="evidence" value="ECO:0007669"/>
    <property type="project" value="UniProtKB-SubCell"/>
</dbReference>
<dbReference type="GO" id="GO:0044233">
    <property type="term" value="C:mitochondria-associated endoplasmic reticulum membrane contact site"/>
    <property type="evidence" value="ECO:0000250"/>
    <property type="project" value="UniProtKB"/>
</dbReference>
<dbReference type="GO" id="GO:0031966">
    <property type="term" value="C:mitochondrial membrane"/>
    <property type="evidence" value="ECO:0007669"/>
    <property type="project" value="UniProtKB-SubCell"/>
</dbReference>
<dbReference type="GO" id="GO:0015036">
    <property type="term" value="F:disulfide oxidoreductase activity"/>
    <property type="evidence" value="ECO:0000250"/>
    <property type="project" value="UniProtKB"/>
</dbReference>
<dbReference type="GO" id="GO:0007420">
    <property type="term" value="P:brain development"/>
    <property type="evidence" value="ECO:0000250"/>
    <property type="project" value="UniProtKB"/>
</dbReference>
<dbReference type="CDD" id="cd02962">
    <property type="entry name" value="TMX2"/>
    <property type="match status" value="1"/>
</dbReference>
<dbReference type="Gene3D" id="3.40.30.10">
    <property type="entry name" value="Glutaredoxin"/>
    <property type="match status" value="1"/>
</dbReference>
<dbReference type="InterPro" id="IPR036249">
    <property type="entry name" value="Thioredoxin-like_sf"/>
</dbReference>
<dbReference type="InterPro" id="IPR013766">
    <property type="entry name" value="Thioredoxin_domain"/>
</dbReference>
<dbReference type="InterPro" id="IPR039101">
    <property type="entry name" value="TMX2"/>
</dbReference>
<dbReference type="InterPro" id="IPR037463">
    <property type="entry name" value="TMX2_thioredoxin_dom"/>
</dbReference>
<dbReference type="PANTHER" id="PTHR15853">
    <property type="entry name" value="THIOREDOXIN-RELATED"/>
    <property type="match status" value="1"/>
</dbReference>
<dbReference type="PANTHER" id="PTHR15853:SF0">
    <property type="entry name" value="THIOREDOXIN-RELATED TRANSMEMBRANE PROTEIN 2"/>
    <property type="match status" value="1"/>
</dbReference>
<dbReference type="Pfam" id="PF00085">
    <property type="entry name" value="Thioredoxin"/>
    <property type="match status" value="1"/>
</dbReference>
<dbReference type="SUPFAM" id="SSF52833">
    <property type="entry name" value="Thioredoxin-like"/>
    <property type="match status" value="1"/>
</dbReference>
<dbReference type="PROSITE" id="PS51352">
    <property type="entry name" value="THIOREDOXIN_2"/>
    <property type="match status" value="1"/>
</dbReference>
<feature type="signal peptide" evidence="2">
    <location>
        <begin position="1"/>
        <end position="48"/>
    </location>
</feature>
<feature type="chain" id="PRO_0000315753" description="Thioredoxin-related transmembrane protein 2">
    <location>
        <begin position="49"/>
        <end position="296"/>
    </location>
</feature>
<feature type="topological domain" description="Extracellular" evidence="2">
    <location>
        <begin position="49"/>
        <end position="102"/>
    </location>
</feature>
<feature type="transmembrane region" description="Helical" evidence="2">
    <location>
        <begin position="103"/>
        <end position="125"/>
    </location>
</feature>
<feature type="topological domain" description="Cytoplasmic" evidence="2">
    <location>
        <begin position="126"/>
        <end position="296"/>
    </location>
</feature>
<feature type="domain" description="Thioredoxin" evidence="3">
    <location>
        <begin position="114"/>
        <end position="269"/>
    </location>
</feature>
<feature type="region of interest" description="Disordered" evidence="4">
    <location>
        <begin position="269"/>
        <end position="296"/>
    </location>
</feature>
<feature type="short sequence motif" description="Di-lysine motif" evidence="5">
    <location>
        <begin position="293"/>
        <end position="296"/>
    </location>
</feature>
<feature type="modified residue" description="Phosphoserine" evidence="1">
    <location>
        <position position="211"/>
    </location>
</feature>
<feature type="modified residue" description="Phosphoserine" evidence="1">
    <location>
        <position position="243"/>
    </location>
</feature>
<feature type="modified residue" description="Phosphoserine" evidence="1">
    <location>
        <position position="288"/>
    </location>
</feature>
<organism>
    <name type="scientific">Macaca fascicularis</name>
    <name type="common">Crab-eating macaque</name>
    <name type="synonym">Cynomolgus monkey</name>
    <dbReference type="NCBI Taxonomy" id="9541"/>
    <lineage>
        <taxon>Eukaryota</taxon>
        <taxon>Metazoa</taxon>
        <taxon>Chordata</taxon>
        <taxon>Craniata</taxon>
        <taxon>Vertebrata</taxon>
        <taxon>Euteleostomi</taxon>
        <taxon>Mammalia</taxon>
        <taxon>Eutheria</taxon>
        <taxon>Euarchontoglires</taxon>
        <taxon>Primates</taxon>
        <taxon>Haplorrhini</taxon>
        <taxon>Catarrhini</taxon>
        <taxon>Cercopithecidae</taxon>
        <taxon>Cercopithecinae</taxon>
        <taxon>Macaca</taxon>
    </lineage>
</organism>
<sequence length="296" mass="34058">MAVLAPLIALVYSVPRLSRWLAQPYYLLSALLSAAFLLVRKLPPLCHGLPTQREDGNPCDFDWREVEILMFLSAIVMMKNRRSITVEQHIGNIFMFSKVANAILFFRLDIRMGLLYITLCIVFLMTCKPPLYMGPEYIKYFNDKTIDEELERDKRVTWIVEFFANWANDCQSFAPIYADLSLKYNCTGLNFGKVDVGRYTDVSTRYKVSTSPLTKQLPTLILFQGGKEVMRRPQIDKKGRAVSWTFSEENVIREFNLNELYQRAKKLSKAGDNIPEEQPVAPTPTRVSDGESKKDK</sequence>
<name>TMX2_MACFA</name>
<comment type="function">
    <text evidence="1">Endoplasmic reticulum and mitochondria-associated protein that probably functions as a regulator of cellular redox state and thereby regulates protein post-translational modification, protein folding and mitochondrial activity. Indirectly regulates neuronal proliferation, migration, and organization in the developing brain.</text>
</comment>
<comment type="subunit">
    <text evidence="1">Monomer (By similarity). Homodimer; disulfide-linked (By similarity). Occurs in both reduced and oxidized monomeric form (By similarity). Oxidative conditions increase homodimerization (By similarity). Interacts with CANX (By similarity). Interacts with ATP2A2 (By similarity).</text>
</comment>
<comment type="subcellular location">
    <subcellularLocation>
        <location evidence="1">Endoplasmic reticulum membrane</location>
        <topology evidence="2">Single-pass type I membrane protein</topology>
    </subcellularLocation>
    <subcellularLocation>
        <location evidence="1">Mitochondrion membrane</location>
        <topology evidence="2">Single-pass type I membrane protein</topology>
    </subcellularLocation>
    <text evidence="1">Localizes to endoplasmic reticulum mitochondria-associated membrane (MAMs) that connect the endoplasmic reticulum and the mitochondria.</text>
</comment>
<comment type="domain">
    <text evidence="5">The thioredoxin domain lacks the 2 redox-active cysteines, suggesting that it lacks thioredoxin activity.</text>
</comment>
<comment type="domain">
    <text evidence="5">The di-lysine motif confers endoplasmic reticulum localization for type I membrane proteins.</text>
</comment>
<keyword id="KW-1015">Disulfide bond</keyword>
<keyword id="KW-0256">Endoplasmic reticulum</keyword>
<keyword id="KW-0472">Membrane</keyword>
<keyword id="KW-0496">Mitochondrion</keyword>
<keyword id="KW-0597">Phosphoprotein</keyword>
<keyword id="KW-1185">Reference proteome</keyword>
<keyword id="KW-0732">Signal</keyword>
<keyword id="KW-0812">Transmembrane</keyword>
<keyword id="KW-1133">Transmembrane helix</keyword>
<evidence type="ECO:0000250" key="1">
    <source>
        <dbReference type="UniProtKB" id="Q9Y320"/>
    </source>
</evidence>
<evidence type="ECO:0000255" key="2"/>
<evidence type="ECO:0000255" key="3">
    <source>
        <dbReference type="PROSITE-ProRule" id="PRU00691"/>
    </source>
</evidence>
<evidence type="ECO:0000256" key="4">
    <source>
        <dbReference type="SAM" id="MobiDB-lite"/>
    </source>
</evidence>
<evidence type="ECO:0000305" key="5"/>